<keyword id="KW-0030">Aminoacyl-tRNA synthetase</keyword>
<keyword id="KW-0067">ATP-binding</keyword>
<keyword id="KW-0963">Cytoplasm</keyword>
<keyword id="KW-0436">Ligase</keyword>
<keyword id="KW-0547">Nucleotide-binding</keyword>
<keyword id="KW-0648">Protein biosynthesis</keyword>
<dbReference type="EC" id="6.1.1.19" evidence="1"/>
<dbReference type="EMBL" id="CP000083">
    <property type="protein sequence ID" value="AAZ28597.1"/>
    <property type="molecule type" value="Genomic_DNA"/>
</dbReference>
<dbReference type="RefSeq" id="WP_011041948.1">
    <property type="nucleotide sequence ID" value="NC_003910.7"/>
</dbReference>
<dbReference type="SMR" id="Q487B1"/>
<dbReference type="STRING" id="167879.CPS_1110"/>
<dbReference type="DNASU" id="3522858"/>
<dbReference type="KEGG" id="cps:CPS_1110"/>
<dbReference type="eggNOG" id="COG0018">
    <property type="taxonomic scope" value="Bacteria"/>
</dbReference>
<dbReference type="HOGENOM" id="CLU_006406_5_1_6"/>
<dbReference type="Proteomes" id="UP000000547">
    <property type="component" value="Chromosome"/>
</dbReference>
<dbReference type="GO" id="GO:0005737">
    <property type="term" value="C:cytoplasm"/>
    <property type="evidence" value="ECO:0007669"/>
    <property type="project" value="UniProtKB-SubCell"/>
</dbReference>
<dbReference type="GO" id="GO:0004814">
    <property type="term" value="F:arginine-tRNA ligase activity"/>
    <property type="evidence" value="ECO:0007669"/>
    <property type="project" value="UniProtKB-UniRule"/>
</dbReference>
<dbReference type="GO" id="GO:0005524">
    <property type="term" value="F:ATP binding"/>
    <property type="evidence" value="ECO:0007669"/>
    <property type="project" value="UniProtKB-UniRule"/>
</dbReference>
<dbReference type="GO" id="GO:0006420">
    <property type="term" value="P:arginyl-tRNA aminoacylation"/>
    <property type="evidence" value="ECO:0007669"/>
    <property type="project" value="UniProtKB-UniRule"/>
</dbReference>
<dbReference type="CDD" id="cd07956">
    <property type="entry name" value="Anticodon_Ia_Arg"/>
    <property type="match status" value="1"/>
</dbReference>
<dbReference type="CDD" id="cd00671">
    <property type="entry name" value="ArgRS_core"/>
    <property type="match status" value="1"/>
</dbReference>
<dbReference type="FunFam" id="3.40.50.620:FF:000030">
    <property type="entry name" value="Arginine--tRNA ligase"/>
    <property type="match status" value="1"/>
</dbReference>
<dbReference type="FunFam" id="1.10.730.10:FF:000006">
    <property type="entry name" value="Arginyl-tRNA synthetase 2, mitochondrial"/>
    <property type="match status" value="1"/>
</dbReference>
<dbReference type="Gene3D" id="3.30.1360.70">
    <property type="entry name" value="Arginyl tRNA synthetase N-terminal domain"/>
    <property type="match status" value="1"/>
</dbReference>
<dbReference type="Gene3D" id="3.40.50.620">
    <property type="entry name" value="HUPs"/>
    <property type="match status" value="1"/>
</dbReference>
<dbReference type="Gene3D" id="1.10.730.10">
    <property type="entry name" value="Isoleucyl-tRNA Synthetase, Domain 1"/>
    <property type="match status" value="1"/>
</dbReference>
<dbReference type="HAMAP" id="MF_00123">
    <property type="entry name" value="Arg_tRNA_synth"/>
    <property type="match status" value="1"/>
</dbReference>
<dbReference type="InterPro" id="IPR001412">
    <property type="entry name" value="aa-tRNA-synth_I_CS"/>
</dbReference>
<dbReference type="InterPro" id="IPR001278">
    <property type="entry name" value="Arg-tRNA-ligase"/>
</dbReference>
<dbReference type="InterPro" id="IPR005148">
    <property type="entry name" value="Arg-tRNA-synth_N"/>
</dbReference>
<dbReference type="InterPro" id="IPR036695">
    <property type="entry name" value="Arg-tRNA-synth_N_sf"/>
</dbReference>
<dbReference type="InterPro" id="IPR035684">
    <property type="entry name" value="ArgRS_core"/>
</dbReference>
<dbReference type="InterPro" id="IPR008909">
    <property type="entry name" value="DALR_anticod-bd"/>
</dbReference>
<dbReference type="InterPro" id="IPR014729">
    <property type="entry name" value="Rossmann-like_a/b/a_fold"/>
</dbReference>
<dbReference type="InterPro" id="IPR009080">
    <property type="entry name" value="tRNAsynth_Ia_anticodon-bd"/>
</dbReference>
<dbReference type="NCBIfam" id="TIGR00456">
    <property type="entry name" value="argS"/>
    <property type="match status" value="1"/>
</dbReference>
<dbReference type="PANTHER" id="PTHR11956:SF5">
    <property type="entry name" value="ARGININE--TRNA LIGASE, CYTOPLASMIC"/>
    <property type="match status" value="1"/>
</dbReference>
<dbReference type="PANTHER" id="PTHR11956">
    <property type="entry name" value="ARGINYL-TRNA SYNTHETASE"/>
    <property type="match status" value="1"/>
</dbReference>
<dbReference type="Pfam" id="PF03485">
    <property type="entry name" value="Arg_tRNA_synt_N"/>
    <property type="match status" value="1"/>
</dbReference>
<dbReference type="Pfam" id="PF05746">
    <property type="entry name" value="DALR_1"/>
    <property type="match status" value="1"/>
</dbReference>
<dbReference type="Pfam" id="PF00750">
    <property type="entry name" value="tRNA-synt_1d"/>
    <property type="match status" value="1"/>
</dbReference>
<dbReference type="PRINTS" id="PR01038">
    <property type="entry name" value="TRNASYNTHARG"/>
</dbReference>
<dbReference type="SMART" id="SM01016">
    <property type="entry name" value="Arg_tRNA_synt_N"/>
    <property type="match status" value="1"/>
</dbReference>
<dbReference type="SMART" id="SM00836">
    <property type="entry name" value="DALR_1"/>
    <property type="match status" value="1"/>
</dbReference>
<dbReference type="SUPFAM" id="SSF47323">
    <property type="entry name" value="Anticodon-binding domain of a subclass of class I aminoacyl-tRNA synthetases"/>
    <property type="match status" value="1"/>
</dbReference>
<dbReference type="SUPFAM" id="SSF55190">
    <property type="entry name" value="Arginyl-tRNA synthetase (ArgRS), N-terminal 'additional' domain"/>
    <property type="match status" value="1"/>
</dbReference>
<dbReference type="SUPFAM" id="SSF52374">
    <property type="entry name" value="Nucleotidylyl transferase"/>
    <property type="match status" value="1"/>
</dbReference>
<dbReference type="PROSITE" id="PS00178">
    <property type="entry name" value="AA_TRNA_LIGASE_I"/>
    <property type="match status" value="1"/>
</dbReference>
<gene>
    <name evidence="1" type="primary">argS</name>
    <name type="ordered locus">CPS_1110</name>
</gene>
<accession>Q487B1</accession>
<proteinExistence type="inferred from homology"/>
<evidence type="ECO:0000255" key="1">
    <source>
        <dbReference type="HAMAP-Rule" id="MF_00123"/>
    </source>
</evidence>
<protein>
    <recommendedName>
        <fullName evidence="1">Arginine--tRNA ligase</fullName>
        <ecNumber evidence="1">6.1.1.19</ecNumber>
    </recommendedName>
    <alternativeName>
        <fullName evidence="1">Arginyl-tRNA synthetase</fullName>
        <shortName evidence="1">ArgRS</shortName>
    </alternativeName>
</protein>
<comment type="catalytic activity">
    <reaction evidence="1">
        <text>tRNA(Arg) + L-arginine + ATP = L-arginyl-tRNA(Arg) + AMP + diphosphate</text>
        <dbReference type="Rhea" id="RHEA:20301"/>
        <dbReference type="Rhea" id="RHEA-COMP:9658"/>
        <dbReference type="Rhea" id="RHEA-COMP:9673"/>
        <dbReference type="ChEBI" id="CHEBI:30616"/>
        <dbReference type="ChEBI" id="CHEBI:32682"/>
        <dbReference type="ChEBI" id="CHEBI:33019"/>
        <dbReference type="ChEBI" id="CHEBI:78442"/>
        <dbReference type="ChEBI" id="CHEBI:78513"/>
        <dbReference type="ChEBI" id="CHEBI:456215"/>
        <dbReference type="EC" id="6.1.1.19"/>
    </reaction>
</comment>
<comment type="subunit">
    <text evidence="1">Monomer.</text>
</comment>
<comment type="subcellular location">
    <subcellularLocation>
        <location evidence="1">Cytoplasm</location>
    </subcellularLocation>
</comment>
<comment type="similarity">
    <text evidence="1">Belongs to the class-I aminoacyl-tRNA synthetase family.</text>
</comment>
<name>SYR_COLP3</name>
<organism>
    <name type="scientific">Colwellia psychrerythraea (strain 34H / ATCC BAA-681)</name>
    <name type="common">Vibrio psychroerythus</name>
    <dbReference type="NCBI Taxonomy" id="167879"/>
    <lineage>
        <taxon>Bacteria</taxon>
        <taxon>Pseudomonadati</taxon>
        <taxon>Pseudomonadota</taxon>
        <taxon>Gammaproteobacteria</taxon>
        <taxon>Alteromonadales</taxon>
        <taxon>Colwelliaceae</taxon>
        <taxon>Colwellia</taxon>
    </lineage>
</organism>
<reference key="1">
    <citation type="journal article" date="2005" name="Proc. Natl. Acad. Sci. U.S.A.">
        <title>The psychrophilic lifestyle as revealed by the genome sequence of Colwellia psychrerythraea 34H through genomic and proteomic analyses.</title>
        <authorList>
            <person name="Methe B.A."/>
            <person name="Nelson K.E."/>
            <person name="Deming J.W."/>
            <person name="Momen B."/>
            <person name="Melamud E."/>
            <person name="Zhang X."/>
            <person name="Moult J."/>
            <person name="Madupu R."/>
            <person name="Nelson W.C."/>
            <person name="Dodson R.J."/>
            <person name="Brinkac L.M."/>
            <person name="Daugherty S.C."/>
            <person name="Durkin A.S."/>
            <person name="DeBoy R.T."/>
            <person name="Kolonay J.F."/>
            <person name="Sullivan S.A."/>
            <person name="Zhou L."/>
            <person name="Davidsen T.M."/>
            <person name="Wu M."/>
            <person name="Huston A.L."/>
            <person name="Lewis M."/>
            <person name="Weaver B."/>
            <person name="Weidman J.F."/>
            <person name="Khouri H."/>
            <person name="Utterback T.R."/>
            <person name="Feldblyum T.V."/>
            <person name="Fraser C.M."/>
        </authorList>
    </citation>
    <scope>NUCLEOTIDE SEQUENCE [LARGE SCALE GENOMIC DNA]</scope>
    <source>
        <strain>34H / ATCC BAA-681</strain>
    </source>
</reference>
<sequence>MNIKNILSERVSAAMVAAGLPEGTNPAISLSNRPQFGDYQANGVMGAAKKLKTNPRELATKVVAELDLDGIASKIELAGPGFINIHLDESWLAAQLNEVAQDDFIGVAQRGTTPGDESQTVVVDYSAPNLAKEMHVGHLRSTIIGDAVVRALEFRGDKVIRQNHMGDWGTQFGMLIAHLSDKLASDEVAETALADLENFYREAKVRFDNEEGFADRARADVVKLQSGDEACAKLWQQFIDISITHSEEIYAKLNVSLKRSDIMGESAYNDDLSTVVDELMAKKIAEESQGAKVVFINEMANKDGEAPVFIVQKSGGGFLYATTDLSACRYRSGKLAANRIIIFTDARQALHFKQVEIVARKAGLLPENVGYQHCPFGMMMGDDGKPFKTRTGGTIKLAELLDESIVRAAALIKEKNPDITDTDLTEISKKVGIGAVKFADLSKNRTSDYIFDWKTMLSFEGATAPYLQYAYSRIQSIFSKAGTVKNDAVINIIEPQEKALALKLLQLEDVVDAVISECTPNLLCNYLYELASLYMSFYEACPILKEGISGEVKASRLALCNVVADTLKQGLDILGIETMERM</sequence>
<feature type="chain" id="PRO_0000242008" description="Arginine--tRNA ligase">
    <location>
        <begin position="1"/>
        <end position="582"/>
    </location>
</feature>
<feature type="short sequence motif" description="'HIGH' region">
    <location>
        <begin position="128"/>
        <end position="138"/>
    </location>
</feature>